<reference key="1">
    <citation type="journal article" date="2000" name="Nature">
        <title>DNA sequence of both chromosomes of the cholera pathogen Vibrio cholerae.</title>
        <authorList>
            <person name="Heidelberg J.F."/>
            <person name="Eisen J.A."/>
            <person name="Nelson W.C."/>
            <person name="Clayton R.A."/>
            <person name="Gwinn M.L."/>
            <person name="Dodson R.J."/>
            <person name="Haft D.H."/>
            <person name="Hickey E.K."/>
            <person name="Peterson J.D."/>
            <person name="Umayam L.A."/>
            <person name="Gill S.R."/>
            <person name="Nelson K.E."/>
            <person name="Read T.D."/>
            <person name="Tettelin H."/>
            <person name="Richardson D.L."/>
            <person name="Ermolaeva M.D."/>
            <person name="Vamathevan J.J."/>
            <person name="Bass S."/>
            <person name="Qin H."/>
            <person name="Dragoi I."/>
            <person name="Sellers P."/>
            <person name="McDonald L.A."/>
            <person name="Utterback T.R."/>
            <person name="Fleischmann R.D."/>
            <person name="Nierman W.C."/>
            <person name="White O."/>
            <person name="Salzberg S.L."/>
            <person name="Smith H.O."/>
            <person name="Colwell R.R."/>
            <person name="Mekalanos J.J."/>
            <person name="Venter J.C."/>
            <person name="Fraser C.M."/>
        </authorList>
    </citation>
    <scope>NUCLEOTIDE SEQUENCE [LARGE SCALE GENOMIC DNA]</scope>
    <source>
        <strain>ATCC 39315 / El Tor Inaba N16961</strain>
    </source>
</reference>
<proteinExistence type="inferred from homology"/>
<organism>
    <name type="scientific">Vibrio cholerae serotype O1 (strain ATCC 39315 / El Tor Inaba N16961)</name>
    <dbReference type="NCBI Taxonomy" id="243277"/>
    <lineage>
        <taxon>Bacteria</taxon>
        <taxon>Pseudomonadati</taxon>
        <taxon>Pseudomonadota</taxon>
        <taxon>Gammaproteobacteria</taxon>
        <taxon>Vibrionales</taxon>
        <taxon>Vibrionaceae</taxon>
        <taxon>Vibrio</taxon>
    </lineage>
</organism>
<sequence>MSLSQAKYLPQEIIRRKRDGEVLTNDEINFFIQGVANNTVSEGQIAAFAMAIFFREMTMPERIALTCAMRDSGMVIDWSHMNFDGPIVDKHSTGGVGDVTSLMLGPMVAACGGYVPMISGRGLGHTGGTLDKLEAIPGYNITPTNDVFGKVTKQAGVAIIGQTGDLAPADKRVYATRDITATVDNISLITASILSKKLAAGLESLVMDVKVGSGAFMPTYEASEELAKSIVAVANGAGTNTTAILTDMNQVLASSAGNAVEVREAVRFLTGEYRNPRLLEVTMASCAEMLVLGKLAKDTAQAREKLQAVLDNGQAADRFGKMVAGLGGPSDFVENYDKYLAKAEIIRPVYAQQSGVISAMDTRAIGMAVVGMGGGRRVATDRIDYAVGFDQFIRLGEIADSNKPLAMIHARNEEQWQQAANALQSAIKVGGDYLPTPDVYRQIRAQDV</sequence>
<name>TYPH_VIBCH</name>
<gene>
    <name evidence="1" type="primary">deoA</name>
    <name type="ordered locus">VC_2349</name>
</gene>
<accession>Q9KPL8</accession>
<comment type="function">
    <text evidence="1">The enzymes which catalyze the reversible phosphorolysis of pyrimidine nucleosides are involved in the degradation of these compounds and in their utilization as carbon and energy sources, or in the rescue of pyrimidine bases for nucleotide synthesis.</text>
</comment>
<comment type="catalytic activity">
    <reaction evidence="1">
        <text>thymidine + phosphate = 2-deoxy-alpha-D-ribose 1-phosphate + thymine</text>
        <dbReference type="Rhea" id="RHEA:16037"/>
        <dbReference type="ChEBI" id="CHEBI:17748"/>
        <dbReference type="ChEBI" id="CHEBI:17821"/>
        <dbReference type="ChEBI" id="CHEBI:43474"/>
        <dbReference type="ChEBI" id="CHEBI:57259"/>
        <dbReference type="EC" id="2.4.2.4"/>
    </reaction>
</comment>
<comment type="pathway">
    <text evidence="1">Pyrimidine metabolism; dTMP biosynthesis via salvage pathway; dTMP from thymine: step 1/2.</text>
</comment>
<comment type="subunit">
    <text evidence="1">Homodimer.</text>
</comment>
<comment type="similarity">
    <text evidence="1">Belongs to the thymidine/pyrimidine-nucleoside phosphorylase family.</text>
</comment>
<comment type="sequence caution" evidence="2">
    <conflict type="erroneous initiation">
        <sequence resource="EMBL-CDS" id="AAF95492"/>
    </conflict>
</comment>
<protein>
    <recommendedName>
        <fullName evidence="1">Thymidine phosphorylase</fullName>
        <ecNumber evidence="1">2.4.2.4</ecNumber>
    </recommendedName>
    <alternativeName>
        <fullName evidence="1">TdRPase</fullName>
    </alternativeName>
</protein>
<keyword id="KW-0328">Glycosyltransferase</keyword>
<keyword id="KW-1185">Reference proteome</keyword>
<keyword id="KW-0808">Transferase</keyword>
<feature type="chain" id="PRO_0000059070" description="Thymidine phosphorylase">
    <location>
        <begin position="1"/>
        <end position="448"/>
    </location>
</feature>
<dbReference type="EC" id="2.4.2.4" evidence="1"/>
<dbReference type="EMBL" id="AE003852">
    <property type="protein sequence ID" value="AAF95492.1"/>
    <property type="status" value="ALT_INIT"/>
    <property type="molecule type" value="Genomic_DNA"/>
</dbReference>
<dbReference type="PIR" id="E82087">
    <property type="entry name" value="E82087"/>
</dbReference>
<dbReference type="RefSeq" id="NP_231979.2">
    <property type="nucleotide sequence ID" value="NC_002505.1"/>
</dbReference>
<dbReference type="RefSeq" id="WP_000059246.1">
    <property type="nucleotide sequence ID" value="NZ_LT906614.1"/>
</dbReference>
<dbReference type="SMR" id="Q9KPL8"/>
<dbReference type="STRING" id="243277.VC_2349"/>
<dbReference type="DNASU" id="2613145"/>
<dbReference type="EnsemblBacteria" id="AAF95492">
    <property type="protein sequence ID" value="AAF95492"/>
    <property type="gene ID" value="VC_2349"/>
</dbReference>
<dbReference type="KEGG" id="vch:VC_2349"/>
<dbReference type="PATRIC" id="fig|243277.26.peg.2236"/>
<dbReference type="eggNOG" id="COG0213">
    <property type="taxonomic scope" value="Bacteria"/>
</dbReference>
<dbReference type="HOGENOM" id="CLU_025040_0_1_6"/>
<dbReference type="UniPathway" id="UPA00578">
    <property type="reaction ID" value="UER00638"/>
</dbReference>
<dbReference type="Proteomes" id="UP000000584">
    <property type="component" value="Chromosome 1"/>
</dbReference>
<dbReference type="GO" id="GO:0005829">
    <property type="term" value="C:cytosol"/>
    <property type="evidence" value="ECO:0000318"/>
    <property type="project" value="GO_Central"/>
</dbReference>
<dbReference type="GO" id="GO:0004645">
    <property type="term" value="F:1,4-alpha-oligoglucan phosphorylase activity"/>
    <property type="evidence" value="ECO:0007669"/>
    <property type="project" value="InterPro"/>
</dbReference>
<dbReference type="GO" id="GO:0009032">
    <property type="term" value="F:thymidine phosphorylase activity"/>
    <property type="evidence" value="ECO:0000318"/>
    <property type="project" value="GO_Central"/>
</dbReference>
<dbReference type="GO" id="GO:0006206">
    <property type="term" value="P:pyrimidine nucleobase metabolic process"/>
    <property type="evidence" value="ECO:0007669"/>
    <property type="project" value="InterPro"/>
</dbReference>
<dbReference type="GO" id="GO:0046104">
    <property type="term" value="P:thymidine metabolic process"/>
    <property type="evidence" value="ECO:0007669"/>
    <property type="project" value="UniProtKB-UniRule"/>
</dbReference>
<dbReference type="FunFam" id="3.40.1030.10:FF:000001">
    <property type="entry name" value="Thymidine phosphorylase"/>
    <property type="match status" value="1"/>
</dbReference>
<dbReference type="FunFam" id="3.90.1170.30:FF:000001">
    <property type="entry name" value="Thymidine phosphorylase"/>
    <property type="match status" value="1"/>
</dbReference>
<dbReference type="Gene3D" id="3.40.1030.10">
    <property type="entry name" value="Nucleoside phosphorylase/phosphoribosyltransferase catalytic domain"/>
    <property type="match status" value="1"/>
</dbReference>
<dbReference type="Gene3D" id="3.90.1170.30">
    <property type="entry name" value="Pyrimidine nucleoside phosphorylase-like, C-terminal domain"/>
    <property type="match status" value="1"/>
</dbReference>
<dbReference type="Gene3D" id="1.20.970.10">
    <property type="entry name" value="Transferase, Pyrimidine Nucleoside Phosphorylase, Chain C"/>
    <property type="match status" value="1"/>
</dbReference>
<dbReference type="HAMAP" id="MF_01628">
    <property type="entry name" value="Thymid_phosp"/>
    <property type="match status" value="1"/>
</dbReference>
<dbReference type="InterPro" id="IPR000312">
    <property type="entry name" value="Glycosyl_Trfase_fam3"/>
</dbReference>
<dbReference type="InterPro" id="IPR017459">
    <property type="entry name" value="Glycosyl_Trfase_fam3_N_dom"/>
</dbReference>
<dbReference type="InterPro" id="IPR036320">
    <property type="entry name" value="Glycosyl_Trfase_fam3_N_dom_sf"/>
</dbReference>
<dbReference type="InterPro" id="IPR035902">
    <property type="entry name" value="Nuc_phospho_transferase"/>
</dbReference>
<dbReference type="InterPro" id="IPR036566">
    <property type="entry name" value="PYNP-like_C_sf"/>
</dbReference>
<dbReference type="InterPro" id="IPR013102">
    <property type="entry name" value="PYNP_C"/>
</dbReference>
<dbReference type="InterPro" id="IPR018090">
    <property type="entry name" value="Pyrmidine_PPas_bac/euk"/>
</dbReference>
<dbReference type="InterPro" id="IPR017872">
    <property type="entry name" value="Pyrmidine_PPase_CS"/>
</dbReference>
<dbReference type="InterPro" id="IPR000053">
    <property type="entry name" value="Thymidine/pyrmidine_PPase"/>
</dbReference>
<dbReference type="InterPro" id="IPR013465">
    <property type="entry name" value="Thymidine_Pase"/>
</dbReference>
<dbReference type="NCBIfam" id="NF004490">
    <property type="entry name" value="PRK05820.1"/>
    <property type="match status" value="1"/>
</dbReference>
<dbReference type="NCBIfam" id="TIGR02643">
    <property type="entry name" value="T_phosphoryl"/>
    <property type="match status" value="1"/>
</dbReference>
<dbReference type="NCBIfam" id="TIGR02644">
    <property type="entry name" value="Y_phosphoryl"/>
    <property type="match status" value="1"/>
</dbReference>
<dbReference type="PANTHER" id="PTHR10515">
    <property type="entry name" value="THYMIDINE PHOSPHORYLASE"/>
    <property type="match status" value="1"/>
</dbReference>
<dbReference type="PANTHER" id="PTHR10515:SF0">
    <property type="entry name" value="THYMIDINE PHOSPHORYLASE"/>
    <property type="match status" value="1"/>
</dbReference>
<dbReference type="Pfam" id="PF02885">
    <property type="entry name" value="Glycos_trans_3N"/>
    <property type="match status" value="1"/>
</dbReference>
<dbReference type="Pfam" id="PF00591">
    <property type="entry name" value="Glycos_transf_3"/>
    <property type="match status" value="1"/>
</dbReference>
<dbReference type="Pfam" id="PF07831">
    <property type="entry name" value="PYNP_C"/>
    <property type="match status" value="1"/>
</dbReference>
<dbReference type="PIRSF" id="PIRSF000478">
    <property type="entry name" value="TP_PyNP"/>
    <property type="match status" value="1"/>
</dbReference>
<dbReference type="SMART" id="SM00941">
    <property type="entry name" value="PYNP_C"/>
    <property type="match status" value="1"/>
</dbReference>
<dbReference type="SUPFAM" id="SSF52418">
    <property type="entry name" value="Nucleoside phosphorylase/phosphoribosyltransferase catalytic domain"/>
    <property type="match status" value="1"/>
</dbReference>
<dbReference type="SUPFAM" id="SSF47648">
    <property type="entry name" value="Nucleoside phosphorylase/phosphoribosyltransferase N-terminal domain"/>
    <property type="match status" value="1"/>
</dbReference>
<dbReference type="SUPFAM" id="SSF54680">
    <property type="entry name" value="Pyrimidine nucleoside phosphorylase C-terminal domain"/>
    <property type="match status" value="1"/>
</dbReference>
<dbReference type="PROSITE" id="PS00647">
    <property type="entry name" value="THYMID_PHOSPHORYLASE"/>
    <property type="match status" value="1"/>
</dbReference>
<evidence type="ECO:0000255" key="1">
    <source>
        <dbReference type="HAMAP-Rule" id="MF_01628"/>
    </source>
</evidence>
<evidence type="ECO:0000305" key="2"/>